<reference key="1">
    <citation type="submission" date="2007-04" db="EMBL/GenBank/DDBJ databases">
        <title>Complete sequence of Shewanella putrefaciens CN-32.</title>
        <authorList>
            <consortium name="US DOE Joint Genome Institute"/>
            <person name="Copeland A."/>
            <person name="Lucas S."/>
            <person name="Lapidus A."/>
            <person name="Barry K."/>
            <person name="Detter J.C."/>
            <person name="Glavina del Rio T."/>
            <person name="Hammon N."/>
            <person name="Israni S."/>
            <person name="Dalin E."/>
            <person name="Tice H."/>
            <person name="Pitluck S."/>
            <person name="Chain P."/>
            <person name="Malfatti S."/>
            <person name="Shin M."/>
            <person name="Vergez L."/>
            <person name="Schmutz J."/>
            <person name="Larimer F."/>
            <person name="Land M."/>
            <person name="Hauser L."/>
            <person name="Kyrpides N."/>
            <person name="Mikhailova N."/>
            <person name="Romine M.F."/>
            <person name="Fredrickson J."/>
            <person name="Tiedje J."/>
            <person name="Richardson P."/>
        </authorList>
    </citation>
    <scope>NUCLEOTIDE SEQUENCE [LARGE SCALE GENOMIC DNA]</scope>
    <source>
        <strain>CN-32 / ATCC BAA-453</strain>
    </source>
</reference>
<keyword id="KW-0028">Amino-acid biosynthesis</keyword>
<keyword id="KW-0963">Cytoplasm</keyword>
<keyword id="KW-0554">One-carbon metabolism</keyword>
<keyword id="KW-0663">Pyridoxal phosphate</keyword>
<keyword id="KW-0808">Transferase</keyword>
<protein>
    <recommendedName>
        <fullName evidence="1">Serine hydroxymethyltransferase</fullName>
        <shortName evidence="1">SHMT</shortName>
        <shortName evidence="1">Serine methylase</shortName>
        <ecNumber evidence="1">2.1.2.1</ecNumber>
    </recommendedName>
</protein>
<evidence type="ECO:0000255" key="1">
    <source>
        <dbReference type="HAMAP-Rule" id="MF_00051"/>
    </source>
</evidence>
<name>GLYA_SHEPC</name>
<organism>
    <name type="scientific">Shewanella putrefaciens (strain CN-32 / ATCC BAA-453)</name>
    <dbReference type="NCBI Taxonomy" id="319224"/>
    <lineage>
        <taxon>Bacteria</taxon>
        <taxon>Pseudomonadati</taxon>
        <taxon>Pseudomonadota</taxon>
        <taxon>Gammaproteobacteria</taxon>
        <taxon>Alteromonadales</taxon>
        <taxon>Shewanellaceae</taxon>
        <taxon>Shewanella</taxon>
    </lineage>
</organism>
<accession>A4Y966</accession>
<feature type="chain" id="PRO_1000006318" description="Serine hydroxymethyltransferase">
    <location>
        <begin position="1"/>
        <end position="417"/>
    </location>
</feature>
<feature type="binding site" evidence="1">
    <location>
        <position position="121"/>
    </location>
    <ligand>
        <name>(6S)-5,6,7,8-tetrahydrofolate</name>
        <dbReference type="ChEBI" id="CHEBI:57453"/>
    </ligand>
</feature>
<feature type="binding site" evidence="1">
    <location>
        <begin position="125"/>
        <end position="127"/>
    </location>
    <ligand>
        <name>(6S)-5,6,7,8-tetrahydrofolate</name>
        <dbReference type="ChEBI" id="CHEBI:57453"/>
    </ligand>
</feature>
<feature type="binding site" evidence="1">
    <location>
        <begin position="355"/>
        <end position="357"/>
    </location>
    <ligand>
        <name>(6S)-5,6,7,8-tetrahydrofolate</name>
        <dbReference type="ChEBI" id="CHEBI:57453"/>
    </ligand>
</feature>
<feature type="site" description="Plays an important role in substrate specificity" evidence="1">
    <location>
        <position position="228"/>
    </location>
</feature>
<feature type="modified residue" description="N6-(pyridoxal phosphate)lysine" evidence="1">
    <location>
        <position position="229"/>
    </location>
</feature>
<gene>
    <name evidence="1" type="primary">glyA</name>
    <name type="ordered locus">Sputcn32_2780</name>
</gene>
<proteinExistence type="inferred from homology"/>
<sequence>MLKKDMNIADYDPELFNAIQNETLRQEEHIELIASENYTSPRVMEAQGSQLTNKYAEGYPGKRYYGGCEYVDVVETLAIERAKQLFGATYANVQPHSGSQANSAVYMALLKPGDTVLGMNLAHGGHLTHGSPVNFSGKLYNIIPYGIDESGKIDYDEMERIAIEHKPKMMIGGFSAYSGIVDWAKMREIADKIGAYLFVDMAHVAGLIAAGVYPNPVPHAHVVTSTTHKTLAGPRGGVILSAADDEELYKKLNSAVFPGGQGGPLMHVIAGKAVAFKEALEPEFKVYQQQVVNNAKAMVEVFLERGYKIVSGGTSNHLMLVDLIGRDLTGKEADAALGSANITVNKNSVPNDPRSPFVTSGVRIGTPAITRRGFKEAEAKQLTGWICDILDDAHNPAVIERVKGQVLALCARFPVYG</sequence>
<comment type="function">
    <text evidence="1">Catalyzes the reversible interconversion of serine and glycine with tetrahydrofolate (THF) serving as the one-carbon carrier. This reaction serves as the major source of one-carbon groups required for the biosynthesis of purines, thymidylate, methionine, and other important biomolecules. Also exhibits THF-independent aldolase activity toward beta-hydroxyamino acids, producing glycine and aldehydes, via a retro-aldol mechanism.</text>
</comment>
<comment type="catalytic activity">
    <reaction evidence="1">
        <text>(6R)-5,10-methylene-5,6,7,8-tetrahydrofolate + glycine + H2O = (6S)-5,6,7,8-tetrahydrofolate + L-serine</text>
        <dbReference type="Rhea" id="RHEA:15481"/>
        <dbReference type="ChEBI" id="CHEBI:15377"/>
        <dbReference type="ChEBI" id="CHEBI:15636"/>
        <dbReference type="ChEBI" id="CHEBI:33384"/>
        <dbReference type="ChEBI" id="CHEBI:57305"/>
        <dbReference type="ChEBI" id="CHEBI:57453"/>
        <dbReference type="EC" id="2.1.2.1"/>
    </reaction>
</comment>
<comment type="cofactor">
    <cofactor evidence="1">
        <name>pyridoxal 5'-phosphate</name>
        <dbReference type="ChEBI" id="CHEBI:597326"/>
    </cofactor>
</comment>
<comment type="pathway">
    <text evidence="1">One-carbon metabolism; tetrahydrofolate interconversion.</text>
</comment>
<comment type="pathway">
    <text evidence="1">Amino-acid biosynthesis; glycine biosynthesis; glycine from L-serine: step 1/1.</text>
</comment>
<comment type="subunit">
    <text evidence="1">Homodimer.</text>
</comment>
<comment type="subcellular location">
    <subcellularLocation>
        <location evidence="1">Cytoplasm</location>
    </subcellularLocation>
</comment>
<comment type="similarity">
    <text evidence="1">Belongs to the SHMT family.</text>
</comment>
<dbReference type="EC" id="2.1.2.1" evidence="1"/>
<dbReference type="EMBL" id="CP000681">
    <property type="protein sequence ID" value="ABP76499.1"/>
    <property type="molecule type" value="Genomic_DNA"/>
</dbReference>
<dbReference type="SMR" id="A4Y966"/>
<dbReference type="STRING" id="319224.Sputcn32_2780"/>
<dbReference type="KEGG" id="spc:Sputcn32_2780"/>
<dbReference type="eggNOG" id="COG0112">
    <property type="taxonomic scope" value="Bacteria"/>
</dbReference>
<dbReference type="HOGENOM" id="CLU_022477_2_1_6"/>
<dbReference type="UniPathway" id="UPA00193"/>
<dbReference type="UniPathway" id="UPA00288">
    <property type="reaction ID" value="UER01023"/>
</dbReference>
<dbReference type="GO" id="GO:0005829">
    <property type="term" value="C:cytosol"/>
    <property type="evidence" value="ECO:0007669"/>
    <property type="project" value="TreeGrafter"/>
</dbReference>
<dbReference type="GO" id="GO:0004372">
    <property type="term" value="F:glycine hydroxymethyltransferase activity"/>
    <property type="evidence" value="ECO:0007669"/>
    <property type="project" value="UniProtKB-UniRule"/>
</dbReference>
<dbReference type="GO" id="GO:0030170">
    <property type="term" value="F:pyridoxal phosphate binding"/>
    <property type="evidence" value="ECO:0007669"/>
    <property type="project" value="UniProtKB-UniRule"/>
</dbReference>
<dbReference type="GO" id="GO:0019264">
    <property type="term" value="P:glycine biosynthetic process from serine"/>
    <property type="evidence" value="ECO:0007669"/>
    <property type="project" value="UniProtKB-UniRule"/>
</dbReference>
<dbReference type="GO" id="GO:0035999">
    <property type="term" value="P:tetrahydrofolate interconversion"/>
    <property type="evidence" value="ECO:0007669"/>
    <property type="project" value="UniProtKB-UniRule"/>
</dbReference>
<dbReference type="CDD" id="cd00378">
    <property type="entry name" value="SHMT"/>
    <property type="match status" value="1"/>
</dbReference>
<dbReference type="FunFam" id="3.40.640.10:FF:000001">
    <property type="entry name" value="Serine hydroxymethyltransferase"/>
    <property type="match status" value="1"/>
</dbReference>
<dbReference type="FunFam" id="3.90.1150.10:FF:000003">
    <property type="entry name" value="Serine hydroxymethyltransferase"/>
    <property type="match status" value="1"/>
</dbReference>
<dbReference type="Gene3D" id="3.90.1150.10">
    <property type="entry name" value="Aspartate Aminotransferase, domain 1"/>
    <property type="match status" value="1"/>
</dbReference>
<dbReference type="Gene3D" id="3.40.640.10">
    <property type="entry name" value="Type I PLP-dependent aspartate aminotransferase-like (Major domain)"/>
    <property type="match status" value="1"/>
</dbReference>
<dbReference type="HAMAP" id="MF_00051">
    <property type="entry name" value="SHMT"/>
    <property type="match status" value="1"/>
</dbReference>
<dbReference type="InterPro" id="IPR015424">
    <property type="entry name" value="PyrdxlP-dep_Trfase"/>
</dbReference>
<dbReference type="InterPro" id="IPR015421">
    <property type="entry name" value="PyrdxlP-dep_Trfase_major"/>
</dbReference>
<dbReference type="InterPro" id="IPR015422">
    <property type="entry name" value="PyrdxlP-dep_Trfase_small"/>
</dbReference>
<dbReference type="InterPro" id="IPR001085">
    <property type="entry name" value="Ser_HO-MeTrfase"/>
</dbReference>
<dbReference type="InterPro" id="IPR049943">
    <property type="entry name" value="Ser_HO-MeTrfase-like"/>
</dbReference>
<dbReference type="InterPro" id="IPR019798">
    <property type="entry name" value="Ser_HO-MeTrfase_PLP_BS"/>
</dbReference>
<dbReference type="InterPro" id="IPR039429">
    <property type="entry name" value="SHMT-like_dom"/>
</dbReference>
<dbReference type="NCBIfam" id="NF000586">
    <property type="entry name" value="PRK00011.1"/>
    <property type="match status" value="1"/>
</dbReference>
<dbReference type="PANTHER" id="PTHR11680">
    <property type="entry name" value="SERINE HYDROXYMETHYLTRANSFERASE"/>
    <property type="match status" value="1"/>
</dbReference>
<dbReference type="PANTHER" id="PTHR11680:SF50">
    <property type="entry name" value="SERINE HYDROXYMETHYLTRANSFERASE"/>
    <property type="match status" value="1"/>
</dbReference>
<dbReference type="Pfam" id="PF00464">
    <property type="entry name" value="SHMT"/>
    <property type="match status" value="1"/>
</dbReference>
<dbReference type="PIRSF" id="PIRSF000412">
    <property type="entry name" value="SHMT"/>
    <property type="match status" value="1"/>
</dbReference>
<dbReference type="SUPFAM" id="SSF53383">
    <property type="entry name" value="PLP-dependent transferases"/>
    <property type="match status" value="1"/>
</dbReference>
<dbReference type="PROSITE" id="PS00096">
    <property type="entry name" value="SHMT"/>
    <property type="match status" value="1"/>
</dbReference>